<organism>
    <name type="scientific">Acinetobacter baumannii (strain ACICU)</name>
    <dbReference type="NCBI Taxonomy" id="405416"/>
    <lineage>
        <taxon>Bacteria</taxon>
        <taxon>Pseudomonadati</taxon>
        <taxon>Pseudomonadota</taxon>
        <taxon>Gammaproteobacteria</taxon>
        <taxon>Moraxellales</taxon>
        <taxon>Moraxellaceae</taxon>
        <taxon>Acinetobacter</taxon>
        <taxon>Acinetobacter calcoaceticus/baumannii complex</taxon>
    </lineage>
</organism>
<protein>
    <recommendedName>
        <fullName evidence="1">Chaperone protein DnaK</fullName>
    </recommendedName>
    <alternativeName>
        <fullName evidence="1">HSP70</fullName>
    </alternativeName>
    <alternativeName>
        <fullName evidence="1">Heat shock 70 kDa protein</fullName>
    </alternativeName>
    <alternativeName>
        <fullName evidence="1">Heat shock protein 70</fullName>
    </alternativeName>
</protein>
<gene>
    <name evidence="1" type="primary">dnaK</name>
    <name type="ordered locus">ACICU_00031</name>
</gene>
<evidence type="ECO:0000255" key="1">
    <source>
        <dbReference type="HAMAP-Rule" id="MF_00332"/>
    </source>
</evidence>
<evidence type="ECO:0000256" key="2">
    <source>
        <dbReference type="SAM" id="MobiDB-lite"/>
    </source>
</evidence>
<accession>B2HZZ7</accession>
<proteinExistence type="inferred from homology"/>
<reference key="1">
    <citation type="journal article" date="2008" name="Antimicrob. Agents Chemother.">
        <title>Whole-genome pyrosequencing of an epidemic multidrug-resistant Acinetobacter baumannii strain belonging to the European clone II group.</title>
        <authorList>
            <person name="Iacono M."/>
            <person name="Villa L."/>
            <person name="Fortini D."/>
            <person name="Bordoni R."/>
            <person name="Imperi F."/>
            <person name="Bonnal R.J."/>
            <person name="Sicheritz-Ponten T."/>
            <person name="De Bellis G."/>
            <person name="Visca P."/>
            <person name="Cassone A."/>
            <person name="Carattoli A."/>
        </authorList>
    </citation>
    <scope>NUCLEOTIDE SEQUENCE [LARGE SCALE GENOMIC DNA]</scope>
    <source>
        <strain>ACICU</strain>
    </source>
</reference>
<name>DNAK_ACIBC</name>
<dbReference type="EMBL" id="CP000863">
    <property type="protein sequence ID" value="ACC55343.1"/>
    <property type="molecule type" value="Genomic_DNA"/>
</dbReference>
<dbReference type="RefSeq" id="WP_001062605.1">
    <property type="nucleotide sequence ID" value="NZ_CP031380.1"/>
</dbReference>
<dbReference type="SMR" id="B2HZZ7"/>
<dbReference type="GeneID" id="92891966"/>
<dbReference type="KEGG" id="abc:ACICU_00031"/>
<dbReference type="HOGENOM" id="CLU_005965_2_1_6"/>
<dbReference type="Proteomes" id="UP000008839">
    <property type="component" value="Chromosome"/>
</dbReference>
<dbReference type="GO" id="GO:0005524">
    <property type="term" value="F:ATP binding"/>
    <property type="evidence" value="ECO:0007669"/>
    <property type="project" value="UniProtKB-UniRule"/>
</dbReference>
<dbReference type="GO" id="GO:0140662">
    <property type="term" value="F:ATP-dependent protein folding chaperone"/>
    <property type="evidence" value="ECO:0007669"/>
    <property type="project" value="InterPro"/>
</dbReference>
<dbReference type="GO" id="GO:0051082">
    <property type="term" value="F:unfolded protein binding"/>
    <property type="evidence" value="ECO:0007669"/>
    <property type="project" value="InterPro"/>
</dbReference>
<dbReference type="CDD" id="cd10234">
    <property type="entry name" value="ASKHA_NBD_HSP70_DnaK-like"/>
    <property type="match status" value="1"/>
</dbReference>
<dbReference type="FunFam" id="2.60.34.10:FF:000014">
    <property type="entry name" value="Chaperone protein DnaK HSP70"/>
    <property type="match status" value="1"/>
</dbReference>
<dbReference type="FunFam" id="3.30.30.30:FF:000003">
    <property type="entry name" value="Heat shock protein 9"/>
    <property type="match status" value="1"/>
</dbReference>
<dbReference type="FunFam" id="1.20.1270.10:FF:000001">
    <property type="entry name" value="Molecular chaperone DnaK"/>
    <property type="match status" value="1"/>
</dbReference>
<dbReference type="FunFam" id="3.30.420.40:FF:000004">
    <property type="entry name" value="Molecular chaperone DnaK"/>
    <property type="match status" value="1"/>
</dbReference>
<dbReference type="FunFam" id="3.90.640.10:FF:000003">
    <property type="entry name" value="Molecular chaperone DnaK"/>
    <property type="match status" value="1"/>
</dbReference>
<dbReference type="Gene3D" id="1.20.1270.10">
    <property type="match status" value="1"/>
</dbReference>
<dbReference type="Gene3D" id="3.30.420.40">
    <property type="match status" value="2"/>
</dbReference>
<dbReference type="Gene3D" id="3.90.640.10">
    <property type="entry name" value="Actin, Chain A, domain 4"/>
    <property type="match status" value="1"/>
</dbReference>
<dbReference type="Gene3D" id="2.60.34.10">
    <property type="entry name" value="Substrate Binding Domain Of DNAk, Chain A, domain 1"/>
    <property type="match status" value="1"/>
</dbReference>
<dbReference type="HAMAP" id="MF_00332">
    <property type="entry name" value="DnaK"/>
    <property type="match status" value="1"/>
</dbReference>
<dbReference type="InterPro" id="IPR043129">
    <property type="entry name" value="ATPase_NBD"/>
</dbReference>
<dbReference type="InterPro" id="IPR012725">
    <property type="entry name" value="Chaperone_DnaK"/>
</dbReference>
<dbReference type="InterPro" id="IPR018181">
    <property type="entry name" value="Heat_shock_70_CS"/>
</dbReference>
<dbReference type="InterPro" id="IPR029048">
    <property type="entry name" value="HSP70_C_sf"/>
</dbReference>
<dbReference type="InterPro" id="IPR029047">
    <property type="entry name" value="HSP70_peptide-bd_sf"/>
</dbReference>
<dbReference type="InterPro" id="IPR013126">
    <property type="entry name" value="Hsp_70_fam"/>
</dbReference>
<dbReference type="NCBIfam" id="NF001413">
    <property type="entry name" value="PRK00290.1"/>
    <property type="match status" value="1"/>
</dbReference>
<dbReference type="NCBIfam" id="TIGR02350">
    <property type="entry name" value="prok_dnaK"/>
    <property type="match status" value="1"/>
</dbReference>
<dbReference type="PANTHER" id="PTHR19375">
    <property type="entry name" value="HEAT SHOCK PROTEIN 70KDA"/>
    <property type="match status" value="1"/>
</dbReference>
<dbReference type="Pfam" id="PF00012">
    <property type="entry name" value="HSP70"/>
    <property type="match status" value="1"/>
</dbReference>
<dbReference type="PRINTS" id="PR00301">
    <property type="entry name" value="HEATSHOCK70"/>
</dbReference>
<dbReference type="SUPFAM" id="SSF53067">
    <property type="entry name" value="Actin-like ATPase domain"/>
    <property type="match status" value="2"/>
</dbReference>
<dbReference type="SUPFAM" id="SSF100934">
    <property type="entry name" value="Heat shock protein 70kD (HSP70), C-terminal subdomain"/>
    <property type="match status" value="1"/>
</dbReference>
<dbReference type="SUPFAM" id="SSF100920">
    <property type="entry name" value="Heat shock protein 70kD (HSP70), peptide-binding domain"/>
    <property type="match status" value="1"/>
</dbReference>
<dbReference type="PROSITE" id="PS00297">
    <property type="entry name" value="HSP70_1"/>
    <property type="match status" value="1"/>
</dbReference>
<dbReference type="PROSITE" id="PS00329">
    <property type="entry name" value="HSP70_2"/>
    <property type="match status" value="1"/>
</dbReference>
<dbReference type="PROSITE" id="PS01036">
    <property type="entry name" value="HSP70_3"/>
    <property type="match status" value="1"/>
</dbReference>
<comment type="function">
    <text evidence="1">Acts as a chaperone.</text>
</comment>
<comment type="induction">
    <text evidence="1">By stress conditions e.g. heat shock.</text>
</comment>
<comment type="similarity">
    <text evidence="1">Belongs to the heat shock protein 70 family.</text>
</comment>
<sequence>MAKIIGIDLGTTNSCVAVLEGDKVKVIENAEGARTTPSIIAYKDGEILVGQSAKRQAVTNPKNTLFAIKRLIGRRYEDQAVQKDIGLVPYKIIKADNGDAWVEVNDKKLAPQQISAEILKKMKKTAEDYLGETVTEAVITVPAYFNDAQRQATKDAGKIAGLDVKRIINEPTAAALAFGMDKKEGDRKVAVYDLGGGTFDVSIIEIADLDGDQQIEVLSTNGDTFLGGEDFDNALIEYLVEEFKKEQNVNLKNDPLALQRLKEAAEKAKIELSSSNATEINLPYITADATGPKHLVINVTRAKLEGLVADLVARTIEPCKIALKDAGLSTSDISDVILVGGQSRMPLVQQKVQEFFGREPRKDVNPDEAVAIGAAIQGAVLSGDKNDVLLLDVTPLTLGIETMGGVLTPIIEKNTTIPAKKSQVFSTAADNQPAVDISVYQGERKMAQQNKLLGNFQLGDIPPAPRGVPQIEVSFDINADGILKVSAKDKSTGKEQSIQIKANSGLSDAEIEAMIKDAEANAEEDRKFEELAKARNEADALISSSNKAVKDLGDKVTEDEKTAVNTAVSELEAATKENDVEAIKAKTEALQNILMPITQRAYEQAQQAGGAEGFDPNAFQGGDAGQQKADDGVVDAEFTEVKDDKK</sequence>
<keyword id="KW-0067">ATP-binding</keyword>
<keyword id="KW-0143">Chaperone</keyword>
<keyword id="KW-0547">Nucleotide-binding</keyword>
<keyword id="KW-0597">Phosphoprotein</keyword>
<keyword id="KW-0346">Stress response</keyword>
<feature type="chain" id="PRO_1000119653" description="Chaperone protein DnaK">
    <location>
        <begin position="1"/>
        <end position="646"/>
    </location>
</feature>
<feature type="region of interest" description="Disordered" evidence="2">
    <location>
        <begin position="603"/>
        <end position="646"/>
    </location>
</feature>
<feature type="compositionally biased region" description="Low complexity" evidence="2">
    <location>
        <begin position="618"/>
        <end position="627"/>
    </location>
</feature>
<feature type="modified residue" description="Phosphothreonine; by autocatalysis" evidence="1">
    <location>
        <position position="198"/>
    </location>
</feature>